<dbReference type="EC" id="2.7.8.-" evidence="1"/>
<dbReference type="EMBL" id="AE017262">
    <property type="protein sequence ID" value="AAT05241.1"/>
    <property type="molecule type" value="Genomic_DNA"/>
</dbReference>
<dbReference type="RefSeq" id="WP_003722636.1">
    <property type="nucleotide sequence ID" value="NC_002973.6"/>
</dbReference>
<dbReference type="SMR" id="Q71WS5"/>
<dbReference type="KEGG" id="lmf:LMOf2365_2476"/>
<dbReference type="HOGENOM" id="CLU_038053_1_1_9"/>
<dbReference type="GO" id="GO:0005886">
    <property type="term" value="C:plasma membrane"/>
    <property type="evidence" value="ECO:0007669"/>
    <property type="project" value="UniProtKB-SubCell"/>
</dbReference>
<dbReference type="GO" id="GO:0008808">
    <property type="term" value="F:cardiolipin synthase activity"/>
    <property type="evidence" value="ECO:0007669"/>
    <property type="project" value="InterPro"/>
</dbReference>
<dbReference type="GO" id="GO:0032049">
    <property type="term" value="P:cardiolipin biosynthetic process"/>
    <property type="evidence" value="ECO:0007669"/>
    <property type="project" value="InterPro"/>
</dbReference>
<dbReference type="CDD" id="cd09110">
    <property type="entry name" value="PLDc_CLS_1"/>
    <property type="match status" value="1"/>
</dbReference>
<dbReference type="CDD" id="cd09112">
    <property type="entry name" value="PLDc_CLS_2"/>
    <property type="match status" value="1"/>
</dbReference>
<dbReference type="FunFam" id="3.30.870.10:FF:000014">
    <property type="entry name" value="Cardiolipin synthase"/>
    <property type="match status" value="1"/>
</dbReference>
<dbReference type="FunFam" id="3.30.870.10:FF:000021">
    <property type="entry name" value="Cardiolipin synthase"/>
    <property type="match status" value="1"/>
</dbReference>
<dbReference type="Gene3D" id="3.30.870.10">
    <property type="entry name" value="Endonuclease Chain A"/>
    <property type="match status" value="2"/>
</dbReference>
<dbReference type="HAMAP" id="MF_01916">
    <property type="entry name" value="Cardiolipin_synth_Cls"/>
    <property type="match status" value="1"/>
</dbReference>
<dbReference type="InterPro" id="IPR030874">
    <property type="entry name" value="Cardiolipin_synth_Firmi"/>
</dbReference>
<dbReference type="InterPro" id="IPR022924">
    <property type="entry name" value="Cardiolipin_synthase"/>
</dbReference>
<dbReference type="InterPro" id="IPR027379">
    <property type="entry name" value="CLS_N"/>
</dbReference>
<dbReference type="InterPro" id="IPR025202">
    <property type="entry name" value="PLD-like_dom"/>
</dbReference>
<dbReference type="InterPro" id="IPR001736">
    <property type="entry name" value="PLipase_D/transphosphatidylase"/>
</dbReference>
<dbReference type="NCBIfam" id="TIGR04265">
    <property type="entry name" value="bac_cardiolipin"/>
    <property type="match status" value="1"/>
</dbReference>
<dbReference type="PANTHER" id="PTHR21248">
    <property type="entry name" value="CARDIOLIPIN SYNTHASE"/>
    <property type="match status" value="1"/>
</dbReference>
<dbReference type="PANTHER" id="PTHR21248:SF22">
    <property type="entry name" value="PHOSPHOLIPASE D"/>
    <property type="match status" value="1"/>
</dbReference>
<dbReference type="Pfam" id="PF13091">
    <property type="entry name" value="PLDc_2"/>
    <property type="match status" value="2"/>
</dbReference>
<dbReference type="Pfam" id="PF13396">
    <property type="entry name" value="PLDc_N"/>
    <property type="match status" value="1"/>
</dbReference>
<dbReference type="SMART" id="SM00155">
    <property type="entry name" value="PLDc"/>
    <property type="match status" value="2"/>
</dbReference>
<dbReference type="SUPFAM" id="SSF56024">
    <property type="entry name" value="Phospholipase D/nuclease"/>
    <property type="match status" value="2"/>
</dbReference>
<dbReference type="PROSITE" id="PS50035">
    <property type="entry name" value="PLD"/>
    <property type="match status" value="2"/>
</dbReference>
<keyword id="KW-1003">Cell membrane</keyword>
<keyword id="KW-0444">Lipid biosynthesis</keyword>
<keyword id="KW-0443">Lipid metabolism</keyword>
<keyword id="KW-0472">Membrane</keyword>
<keyword id="KW-0594">Phospholipid biosynthesis</keyword>
<keyword id="KW-1208">Phospholipid metabolism</keyword>
<keyword id="KW-0677">Repeat</keyword>
<keyword id="KW-0808">Transferase</keyword>
<keyword id="KW-0812">Transmembrane</keyword>
<keyword id="KW-1133">Transmembrane helix</keyword>
<sequence>MGLLAYLLVILLILNVFFAAVTVFLERRDTSATWAWLLVLTFVPIFGFIIYLIFGRKLSGKKIFDWKGQEKIGIQESTANQIEMIRQKEFPFSDPNVKKHRDLIYLLLVNDGAILTQDNEVELFVDGHEKFDALIADIEKAKDHIHLIYYIFHSDELGNRLMRVLERKAAEGLNVKIIYDAMGSRTTKKSFFRTFQKNGGLVRPFFPSKLPLINFRLNYRNHRKLAIIDGDVGYIGGFNIGDEYLGASKKFGYWRDTHLRVHGKAVYAMQTRFIMDWNSASSTHKIDYKARYFPTFHGKGHTSMQIVSSGPDSEWQQIKNGYIKMINAAKKTIYLQSPYFIPDASLLEAIKIAALSGVDVRVMIPNKPDHAFVYRATTNYAGELMETGAKIFIYDNGFIHAKTLVVDGEIASVGTANMDFRSFRLNFEVNAFIYEKQMVQKLEDAFLEDILKSYQLTPELYAKRSLWIKFKEAVSRLLSPIL</sequence>
<feature type="chain" id="PRO_0000201257" description="Cardiolipin synthase">
    <location>
        <begin position="1"/>
        <end position="482"/>
    </location>
</feature>
<feature type="transmembrane region" description="Helical" evidence="1">
    <location>
        <begin position="4"/>
        <end position="24"/>
    </location>
</feature>
<feature type="transmembrane region" description="Helical" evidence="1">
    <location>
        <begin position="34"/>
        <end position="54"/>
    </location>
</feature>
<feature type="domain" description="PLD phosphodiesterase 1" evidence="1">
    <location>
        <begin position="217"/>
        <end position="244"/>
    </location>
</feature>
<feature type="domain" description="PLD phosphodiesterase 2" evidence="1">
    <location>
        <begin position="395"/>
        <end position="422"/>
    </location>
</feature>
<feature type="active site" evidence="1">
    <location>
        <position position="222"/>
    </location>
</feature>
<feature type="active site" evidence="1">
    <location>
        <position position="224"/>
    </location>
</feature>
<feature type="active site" evidence="1">
    <location>
        <position position="229"/>
    </location>
</feature>
<feature type="active site" evidence="1">
    <location>
        <position position="400"/>
    </location>
</feature>
<feature type="active site" evidence="1">
    <location>
        <position position="402"/>
    </location>
</feature>
<feature type="active site" evidence="1">
    <location>
        <position position="407"/>
    </location>
</feature>
<name>CLS_LISMF</name>
<accession>Q71WS5</accession>
<evidence type="ECO:0000255" key="1">
    <source>
        <dbReference type="HAMAP-Rule" id="MF_01916"/>
    </source>
</evidence>
<protein>
    <recommendedName>
        <fullName evidence="1">Cardiolipin synthase</fullName>
        <shortName evidence="1">CL synthase</shortName>
        <ecNumber evidence="1">2.7.8.-</ecNumber>
    </recommendedName>
</protein>
<proteinExistence type="inferred from homology"/>
<comment type="function">
    <text evidence="1">Catalyzes the reversible phosphatidyl group transfer from one phosphatidylglycerol molecule to another to form cardiolipin (CL) (diphosphatidylglycerol) and glycerol.</text>
</comment>
<comment type="catalytic activity">
    <reaction evidence="1">
        <text>2 a 1,2-diacyl-sn-glycero-3-phospho-(1'-sn-glycerol) = a cardiolipin + glycerol</text>
        <dbReference type="Rhea" id="RHEA:31451"/>
        <dbReference type="ChEBI" id="CHEBI:17754"/>
        <dbReference type="ChEBI" id="CHEBI:62237"/>
        <dbReference type="ChEBI" id="CHEBI:64716"/>
    </reaction>
</comment>
<comment type="subcellular location">
    <subcellularLocation>
        <location evidence="1">Cell membrane</location>
        <topology evidence="1">Multi-pass membrane protein</topology>
    </subcellularLocation>
</comment>
<comment type="similarity">
    <text evidence="1">Belongs to the phospholipase D family. Cardiolipin synthase subfamily.</text>
</comment>
<organism>
    <name type="scientific">Listeria monocytogenes serotype 4b (strain F2365)</name>
    <dbReference type="NCBI Taxonomy" id="265669"/>
    <lineage>
        <taxon>Bacteria</taxon>
        <taxon>Bacillati</taxon>
        <taxon>Bacillota</taxon>
        <taxon>Bacilli</taxon>
        <taxon>Bacillales</taxon>
        <taxon>Listeriaceae</taxon>
        <taxon>Listeria</taxon>
    </lineage>
</organism>
<reference key="1">
    <citation type="journal article" date="2004" name="Nucleic Acids Res.">
        <title>Whole genome comparisons of serotype 4b and 1/2a strains of the food-borne pathogen Listeria monocytogenes reveal new insights into the core genome components of this species.</title>
        <authorList>
            <person name="Nelson K.E."/>
            <person name="Fouts D.E."/>
            <person name="Mongodin E.F."/>
            <person name="Ravel J."/>
            <person name="DeBoy R.T."/>
            <person name="Kolonay J.F."/>
            <person name="Rasko D.A."/>
            <person name="Angiuoli S.V."/>
            <person name="Gill S.R."/>
            <person name="Paulsen I.T."/>
            <person name="Peterson J.D."/>
            <person name="White O."/>
            <person name="Nelson W.C."/>
            <person name="Nierman W.C."/>
            <person name="Beanan M.J."/>
            <person name="Brinkac L.M."/>
            <person name="Daugherty S.C."/>
            <person name="Dodson R.J."/>
            <person name="Durkin A.S."/>
            <person name="Madupu R."/>
            <person name="Haft D.H."/>
            <person name="Selengut J."/>
            <person name="Van Aken S.E."/>
            <person name="Khouri H.M."/>
            <person name="Fedorova N."/>
            <person name="Forberger H.A."/>
            <person name="Tran B."/>
            <person name="Kathariou S."/>
            <person name="Wonderling L.D."/>
            <person name="Uhlich G.A."/>
            <person name="Bayles D.O."/>
            <person name="Luchansky J.B."/>
            <person name="Fraser C.M."/>
        </authorList>
    </citation>
    <scope>NUCLEOTIDE SEQUENCE [LARGE SCALE GENOMIC DNA]</scope>
    <source>
        <strain>F2365</strain>
    </source>
</reference>
<gene>
    <name type="primary">cls</name>
    <name type="ordered locus">LMOf2365_2476</name>
</gene>